<dbReference type="EMBL" id="DQ324366">
    <property type="protein sequence ID" value="ABC54559.1"/>
    <property type="molecule type" value="mRNA"/>
</dbReference>
<dbReference type="SMR" id="Q0P031"/>
<dbReference type="KEGG" id="xla:779073"/>
<dbReference type="AGR" id="Xenbase:XB-GENE-866467"/>
<dbReference type="CTD" id="779073"/>
<dbReference type="Xenbase" id="XB-GENE-866467">
    <property type="gene designation" value="vsx1.L"/>
</dbReference>
<dbReference type="OrthoDB" id="6159439at2759"/>
<dbReference type="Proteomes" id="UP000186698">
    <property type="component" value="Chromosome 5L"/>
</dbReference>
<dbReference type="Bgee" id="779073">
    <property type="expression patterns" value="Expressed in camera-type eye and 4 other cell types or tissues"/>
</dbReference>
<dbReference type="GO" id="GO:0005634">
    <property type="term" value="C:nucleus"/>
    <property type="evidence" value="ECO:0000250"/>
    <property type="project" value="UniProtKB"/>
</dbReference>
<dbReference type="GO" id="GO:0000981">
    <property type="term" value="F:DNA-binding transcription factor activity, RNA polymerase II-specific"/>
    <property type="evidence" value="ECO:0007669"/>
    <property type="project" value="InterPro"/>
</dbReference>
<dbReference type="GO" id="GO:1990837">
    <property type="term" value="F:sequence-specific double-stranded DNA binding"/>
    <property type="evidence" value="ECO:0000318"/>
    <property type="project" value="GO_Central"/>
</dbReference>
<dbReference type="GO" id="GO:0006357">
    <property type="term" value="P:regulation of transcription by RNA polymerase II"/>
    <property type="evidence" value="ECO:0000318"/>
    <property type="project" value="GO_Central"/>
</dbReference>
<dbReference type="GO" id="GO:0060040">
    <property type="term" value="P:retinal bipolar neuron differentiation"/>
    <property type="evidence" value="ECO:0000270"/>
    <property type="project" value="UniProtKB"/>
</dbReference>
<dbReference type="CDD" id="cd00086">
    <property type="entry name" value="homeodomain"/>
    <property type="match status" value="1"/>
</dbReference>
<dbReference type="FunFam" id="1.10.10.60:FF:000065">
    <property type="entry name" value="Visual system homeobox 1"/>
    <property type="match status" value="1"/>
</dbReference>
<dbReference type="Gene3D" id="1.10.10.60">
    <property type="entry name" value="Homeodomain-like"/>
    <property type="match status" value="1"/>
</dbReference>
<dbReference type="InterPro" id="IPR023339">
    <property type="entry name" value="CVC"/>
</dbReference>
<dbReference type="InterPro" id="IPR001356">
    <property type="entry name" value="HD"/>
</dbReference>
<dbReference type="InterPro" id="IPR017970">
    <property type="entry name" value="Homeobox_CS"/>
</dbReference>
<dbReference type="InterPro" id="IPR009057">
    <property type="entry name" value="Homeodomain-like_sf"/>
</dbReference>
<dbReference type="InterPro" id="IPR052294">
    <property type="entry name" value="VSX_homeobox_regulators"/>
</dbReference>
<dbReference type="PANTHER" id="PTHR46892:SF2">
    <property type="entry name" value="VISUAL SYSTEM HOMEOBOX 1"/>
    <property type="match status" value="1"/>
</dbReference>
<dbReference type="PANTHER" id="PTHR46892">
    <property type="entry name" value="VISUAL SYSTEM HOMEOBOX 2"/>
    <property type="match status" value="1"/>
</dbReference>
<dbReference type="Pfam" id="PF00046">
    <property type="entry name" value="Homeodomain"/>
    <property type="match status" value="1"/>
</dbReference>
<dbReference type="SMART" id="SM00389">
    <property type="entry name" value="HOX"/>
    <property type="match status" value="1"/>
</dbReference>
<dbReference type="SUPFAM" id="SSF46689">
    <property type="entry name" value="Homeodomain-like"/>
    <property type="match status" value="1"/>
</dbReference>
<dbReference type="PROSITE" id="PS51496">
    <property type="entry name" value="CVC"/>
    <property type="match status" value="1"/>
</dbReference>
<dbReference type="PROSITE" id="PS00027">
    <property type="entry name" value="HOMEOBOX_1"/>
    <property type="match status" value="1"/>
</dbReference>
<dbReference type="PROSITE" id="PS50071">
    <property type="entry name" value="HOMEOBOX_2"/>
    <property type="match status" value="1"/>
</dbReference>
<sequence>MTGRDDISEAKSKGKILAPSVGNEKSGRLHGPAMRSKGFAITDLLGLEAELQPPSISLPNCEGPGVSLGGVSLTNGSLPLGLGFLCGFASQQPPGTTCLLPTHIPFLQPRPDHHYLHTSDKHKENISDDDSILGDKNDLKASSAQSKRKKRRHRTVFTAHQLDELEKSFNEAHYPDVYAREMLALKTELPEDRIQVWFQNRRAKWRKREKCWGRSSVMAEYGLYGAMVRHSIPLPESIINSAKNGLVGSCAPWLLGMHKKSVDITSKVDADDLVTERSRGESQVRDFTNPHSESHRSPRHHSHSMDISEERAIDLSSTAKQENQSSGRHNSIRDSQSDFTDSDH</sequence>
<organism>
    <name type="scientific">Xenopus laevis</name>
    <name type="common">African clawed frog</name>
    <dbReference type="NCBI Taxonomy" id="8355"/>
    <lineage>
        <taxon>Eukaryota</taxon>
        <taxon>Metazoa</taxon>
        <taxon>Chordata</taxon>
        <taxon>Craniata</taxon>
        <taxon>Vertebrata</taxon>
        <taxon>Euteleostomi</taxon>
        <taxon>Amphibia</taxon>
        <taxon>Batrachia</taxon>
        <taxon>Anura</taxon>
        <taxon>Pipoidea</taxon>
        <taxon>Pipidae</taxon>
        <taxon>Xenopodinae</taxon>
        <taxon>Xenopus</taxon>
        <taxon>Xenopus</taxon>
    </lineage>
</organism>
<feature type="chain" id="PRO_0000283817" description="Visual system homeobox 1">
    <location>
        <begin position="1"/>
        <end position="344"/>
    </location>
</feature>
<feature type="domain" description="CVC" evidence="4">
    <location>
        <begin position="210"/>
        <end position="263"/>
    </location>
</feature>
<feature type="DNA-binding region" description="Homeobox" evidence="3">
    <location>
        <begin position="150"/>
        <end position="209"/>
    </location>
</feature>
<feature type="region of interest" description="Disordered" evidence="5">
    <location>
        <begin position="1"/>
        <end position="33"/>
    </location>
</feature>
<feature type="region of interest" description="Octapeptide motif" evidence="2">
    <location>
        <begin position="39"/>
        <end position="46"/>
    </location>
</feature>
<feature type="region of interest" description="Disordered" evidence="5">
    <location>
        <begin position="111"/>
        <end position="154"/>
    </location>
</feature>
<feature type="region of interest" description="Disordered" evidence="5">
    <location>
        <begin position="273"/>
        <end position="344"/>
    </location>
</feature>
<feature type="short sequence motif" description="Nuclear localization signal" evidence="2">
    <location>
        <begin position="146"/>
        <end position="150"/>
    </location>
</feature>
<feature type="compositionally biased region" description="Basic and acidic residues" evidence="5">
    <location>
        <begin position="1"/>
        <end position="12"/>
    </location>
</feature>
<feature type="compositionally biased region" description="Basic and acidic residues" evidence="5">
    <location>
        <begin position="111"/>
        <end position="126"/>
    </location>
</feature>
<feature type="compositionally biased region" description="Basic and acidic residues" evidence="5">
    <location>
        <begin position="273"/>
        <end position="284"/>
    </location>
</feature>
<feature type="compositionally biased region" description="Basic and acidic residues" evidence="5">
    <location>
        <begin position="303"/>
        <end position="313"/>
    </location>
</feature>
<feature type="compositionally biased region" description="Polar residues" evidence="5">
    <location>
        <begin position="315"/>
        <end position="330"/>
    </location>
</feature>
<feature type="compositionally biased region" description="Basic and acidic residues" evidence="5">
    <location>
        <begin position="331"/>
        <end position="344"/>
    </location>
</feature>
<proteinExistence type="evidence at transcript level"/>
<keyword id="KW-0217">Developmental protein</keyword>
<keyword id="KW-0221">Differentiation</keyword>
<keyword id="KW-0238">DNA-binding</keyword>
<keyword id="KW-0371">Homeobox</keyword>
<keyword id="KW-0539">Nucleus</keyword>
<keyword id="KW-1185">Reference proteome</keyword>
<keyword id="KW-0804">Transcription</keyword>
<keyword id="KW-0805">Transcription regulation</keyword>
<reference evidence="9 10" key="1">
    <citation type="journal article" date="2006" name="Dev. Genes Evol.">
        <title>Cloning and developmental expression of the Xenopus homeobox gene Xvsx1.</title>
        <authorList>
            <person name="D'Autilia S."/>
            <person name="Decembrini S."/>
            <person name="Casarosa S."/>
            <person name="He R.-Q."/>
            <person name="Barsacchi G."/>
            <person name="Cremisi F."/>
            <person name="Andreazzoli M."/>
        </authorList>
    </citation>
    <scope>NUCLEOTIDE SEQUENCE [MRNA]</scope>
    <scope>TISSUE SPECIFICITY</scope>
    <scope>DEVELOPMENTAL STAGE</scope>
    <source>
        <tissue evidence="7">Embryo</tissue>
    </source>
</reference>
<reference evidence="9" key="2">
    <citation type="journal article" date="2006" name="PLoS Biol.">
        <title>Timing the generation of distinct retinal cells by homeobox proteins.</title>
        <authorList>
            <person name="Decembrini S."/>
            <person name="Andreazzoli M."/>
            <person name="Vignali R."/>
            <person name="Barsacchi G."/>
            <person name="Cremisi F."/>
        </authorList>
    </citation>
    <scope>FUNCTION</scope>
    <scope>TISSUE SPECIFICITY</scope>
    <scope>DEVELOPMENTAL STAGE</scope>
</reference>
<name>VSX1_XENLA</name>
<accession>Q0P031</accession>
<comment type="function">
    <text evidence="6">Involved in the differentiation of bipolar cells, the last neurons of the retina to form. Together with other retinal homeobox proteins, acts as an effector of a cellular clock which, depending on cell cycle progression, establishes the generation of distinct retinal neuronal cell types.</text>
</comment>
<comment type="subcellular location">
    <subcellularLocation>
        <location evidence="1">Nucleus</location>
    </subcellularLocation>
</comment>
<comment type="tissue specificity">
    <text evidence="6 7">Initially transcribed but not translated in early neural (stage 15) retinal progenitors. Translation occurs during late retinogenesis and requires cell cycle progression with the timing of translation paralleling that of the generation of bipolar cells. Also expressed in the ciliary marginal zone (CMZ) with translation beginning in early postmitotic cells. Also transcribed in early neurulae in the presumptive spinal cord, with expression expanding anteriorly to the midbrain-hindbrain boundary during the tail bud stage.</text>
</comment>
<comment type="developmental stage">
    <text evidence="6 7">First transcribed in the neurula at stage 15 and is maintained throughout later stages, reaching a peak around stage 42.</text>
</comment>
<comment type="similarity">
    <text evidence="2">Belongs to the paired homeobox family.</text>
</comment>
<gene>
    <name evidence="8" type="primary">vsx1</name>
</gene>
<evidence type="ECO:0000250" key="1">
    <source>
        <dbReference type="UniProtKB" id="O42250"/>
    </source>
</evidence>
<evidence type="ECO:0000255" key="2"/>
<evidence type="ECO:0000255" key="3">
    <source>
        <dbReference type="PROSITE-ProRule" id="PRU00108"/>
    </source>
</evidence>
<evidence type="ECO:0000255" key="4">
    <source>
        <dbReference type="PROSITE-ProRule" id="PRU00829"/>
    </source>
</evidence>
<evidence type="ECO:0000256" key="5">
    <source>
        <dbReference type="SAM" id="MobiDB-lite"/>
    </source>
</evidence>
<evidence type="ECO:0000269" key="6">
    <source>
    </source>
</evidence>
<evidence type="ECO:0000269" key="7">
    <source>
    </source>
</evidence>
<evidence type="ECO:0000303" key="8">
    <source>
    </source>
</evidence>
<evidence type="ECO:0000305" key="9"/>
<evidence type="ECO:0000312" key="10">
    <source>
        <dbReference type="EMBL" id="ABC54559.1"/>
    </source>
</evidence>
<protein>
    <recommendedName>
        <fullName>Visual system homeobox 1</fullName>
    </recommendedName>
    <alternativeName>
        <fullName>Transcription factor vsx1</fullName>
    </alternativeName>
    <alternativeName>
        <fullName>Xvsx1</fullName>
    </alternativeName>
</protein>